<proteinExistence type="evidence at protein level"/>
<accession>P13383</accession>
<organism>
    <name type="scientific">Rattus norvegicus</name>
    <name type="common">Rat</name>
    <dbReference type="NCBI Taxonomy" id="10116"/>
    <lineage>
        <taxon>Eukaryota</taxon>
        <taxon>Metazoa</taxon>
        <taxon>Chordata</taxon>
        <taxon>Craniata</taxon>
        <taxon>Vertebrata</taxon>
        <taxon>Euteleostomi</taxon>
        <taxon>Mammalia</taxon>
        <taxon>Eutheria</taxon>
        <taxon>Euarchontoglires</taxon>
        <taxon>Glires</taxon>
        <taxon>Rodentia</taxon>
        <taxon>Myomorpha</taxon>
        <taxon>Muroidea</taxon>
        <taxon>Muridae</taxon>
        <taxon>Murinae</taxon>
        <taxon>Rattus</taxon>
    </lineage>
</organism>
<gene>
    <name type="primary">Ncl</name>
    <name type="synonym">Nuc</name>
</gene>
<evidence type="ECO:0000250" key="1"/>
<evidence type="ECO:0000250" key="2">
    <source>
        <dbReference type="UniProtKB" id="P08199"/>
    </source>
</evidence>
<evidence type="ECO:0000250" key="3">
    <source>
        <dbReference type="UniProtKB" id="P09405"/>
    </source>
</evidence>
<evidence type="ECO:0000250" key="4">
    <source>
        <dbReference type="UniProtKB" id="P19338"/>
    </source>
</evidence>
<evidence type="ECO:0000255" key="5">
    <source>
        <dbReference type="PROSITE-ProRule" id="PRU00176"/>
    </source>
</evidence>
<evidence type="ECO:0000256" key="6">
    <source>
        <dbReference type="SAM" id="MobiDB-lite"/>
    </source>
</evidence>
<evidence type="ECO:0007744" key="7">
    <source>
    </source>
</evidence>
<evidence type="ECO:0007744" key="8">
    <source>
    </source>
</evidence>
<comment type="function">
    <text evidence="1">Nucleolin is the major nucleolar protein of growing eukaryotic cells. It is found associated with intranucleolar chromatin and pre-ribosomal particles. It induces chromatin decondensation by binding to histone H1. It is thought to play a role in pre-rRNA transcription and ribosome assembly. May play a role in the process of transcriptional elongation. Binds RNA oligonucleotides with 5'-UUAGGG-3' repeats more tightly than the telomeric single-stranded DNA 5'-TTAGGG-3' repeats (By similarity).</text>
</comment>
<comment type="subunit">
    <text evidence="3 4">Identified in a IGF2BP1-dependent mRNP granule complex containing untranslated mRNAs. Component of the SWAP complex that consists of NPM1, NCL/nucleolin, PARP1 and SWAP70. Component of a complex which is at least composed of HTATSF1/Tat-SF1, the P-TEFb complex components CDK9 and CCNT1, RNA polymerase II, SUPT5H, and NCL/nucleolin. Interacts with AICDA. Interacts with APTX. Interacts with C1QBP. Interacts with ERBB4. Interacts (via C-terminus) with FMR1 isoform 6 (via N-terminus). Interacts with GZF1; this interaction is important for nucleolar localization of GZF1. Interacts with NSUN2. Interacts with NVL. Interacts (via N-terminus domain) with SETX. Interacts (via RRM1 and C-terminal RRM4/Arg/Gly-rich domains) with TERT; the interaction is important for nucleolar localization of TERT. Interacts with WDR46. Interacts with ZFP36. Interacts with LRRC34. Interacts with RRP1B. Interacts with HNRNPU; this interaction occurs during mitosis. Interacts with RIOK1; RIOK1 recruits NCL to PRMT5 for symmetrically methylation (By similarity). Interacts with ZBTB7B (By similarity). Interacts with MDK; this interaction promotes NCL clustering and lateral movements of this complex into lipid rafts leading to MDK internalization (By similarity). Interacts with HDGF (By similarity). Interacts with ALKBH2. Interacts with IGFBP5; this interaction is necessary for IGFBP5 localization to the nucleus (By similarity). Interacts with DDX24 (when ubiquitinated); this interaction may be important during ribosome biogenesis (By similarity).</text>
</comment>
<comment type="subcellular location">
    <subcellularLocation>
        <location evidence="4">Nucleus</location>
        <location evidence="4">Nucleolus</location>
    </subcellularLocation>
    <subcellularLocation>
        <location evidence="1">Cytoplasm</location>
    </subcellularLocation>
    <text evidence="1">Localized in cytoplasmic mRNP granules containing untranslated mRNAs.</text>
</comment>
<comment type="PTM">
    <text evidence="1">Some glutamate residues are glycylated by TTLL8. This modification occurs exclusively on glutamate residues and results in a glycine chain on the gamma-carboxyl group (By similarity).</text>
</comment>
<comment type="PTM">
    <text evidence="4">Symmetrically methylated by PRMT5 (By similarity).</text>
</comment>
<sequence length="713" mass="77147">MVKLAKAGKTHGESKKMAPPPKEVEEDSEDEEMSEDEDDSSGEEEVVIPQKKGKKATTTPAKKVVVSQTKKAAVPTPAKKAAVTPGKKAAATPAKKAVTPAKVVPTPGKKGAAQAKALVPTPGKKGAVTPAKGAKNGKNAKKEDSDEDEDEEDEDDSDEDEDEEDEFEPPVVKGVKPAKAAPAAPASEDEDEEDDDDEDDDDDDEEEEEEDDSEEEVMEITPAKGKKTPAKVVPVKAKSVAEEEEDDEDDEDEEEDEDEEDEEDDEDEDEEEEEEPVKAAPGKRKKEMTKQKEAPEAKKQKIEGSEPTTPFNLFIGNLNPNKSVAELKVAISELFAKNDLAAVDVRTGTNRKFGYVDFESAEDLEKALELTGLKVFGNEIKLEKPKGRDSKKVRAARTLLAKNLSFNITEDELKEVFEDAVEIRLVSQDGRSKGIAYIEFKSEADAEKNLEEKQGAEIDGRSVSLYYTGEKGQRQERTGKNSTWSGESKTLVLSNLSYSATEETLQEVFEKATFIKVPQNPHGKSKGYAFIEFASFEDAKEALNSCNKMEIEGRTIRLELQGPRGSPNARSQPSKTLFVKGLSEDTTEETLKESFEGSVRARIVTDRETGSSKGFGFVDFNSEEDAKAAKEAMEDGEIDGNKVTLDWAKPKGEGGFGGRGGGRGGFGGRGGGRGGRGGFGGRGRGGFGGRGGFRGGRGGGGDFKPQGKKTKFE</sequence>
<keyword id="KW-0007">Acetylation</keyword>
<keyword id="KW-0963">Cytoplasm</keyword>
<keyword id="KW-0238">DNA-binding</keyword>
<keyword id="KW-1017">Isopeptide bond</keyword>
<keyword id="KW-0488">Methylation</keyword>
<keyword id="KW-0539">Nucleus</keyword>
<keyword id="KW-0597">Phosphoprotein</keyword>
<keyword id="KW-1185">Reference proteome</keyword>
<keyword id="KW-0677">Repeat</keyword>
<keyword id="KW-0694">RNA-binding</keyword>
<keyword id="KW-0832">Ubl conjugation</keyword>
<reference key="1">
    <citation type="journal article" date="1990" name="Gene">
        <title>Nucleolin gene organization in rodents: highly conserved sequences within three of the 13 introns.</title>
        <authorList>
            <person name="Bourbon H.-M."/>
            <person name="Amalric F."/>
        </authorList>
    </citation>
    <scope>NUCLEOTIDE SEQUENCE [GENOMIC DNA]</scope>
</reference>
<reference key="2">
    <citation type="journal article" date="1988" name="Gene">
        <title>Sequence and structure of the nucleolin promoter in rodents: characterization of a strikingly conserved CpG island.</title>
        <authorList>
            <person name="Bourbon H.-M."/>
            <person name="Prudhomme M."/>
            <person name="Amalric F."/>
        </authorList>
    </citation>
    <scope>NUCLEOTIDE SEQUENCE [GENOMIC DNA] OF 1-45</scope>
</reference>
<reference key="3">
    <citation type="journal article" date="2006" name="Proc. Natl. Acad. Sci. U.S.A.">
        <title>Quantitative phosphoproteomics of vasopressin-sensitive renal cells: regulation of aquaporin-2 phosphorylation at two sites.</title>
        <authorList>
            <person name="Hoffert J.D."/>
            <person name="Pisitkun T."/>
            <person name="Wang G."/>
            <person name="Shen R.-F."/>
            <person name="Knepper M.A."/>
        </authorList>
    </citation>
    <scope>PHOSPHORYLATION [LARGE SCALE ANALYSIS] AT SER-145 AND SER-157</scope>
    <scope>IDENTIFICATION BY MASS SPECTROMETRY [LARGE SCALE ANALYSIS]</scope>
</reference>
<reference key="4">
    <citation type="journal article" date="2012" name="Nat. Commun.">
        <title>Quantitative maps of protein phosphorylation sites across 14 different rat organs and tissues.</title>
        <authorList>
            <person name="Lundby A."/>
            <person name="Secher A."/>
            <person name="Lage K."/>
            <person name="Nordsborg N.B."/>
            <person name="Dmytriyev A."/>
            <person name="Lundby C."/>
            <person name="Olsen J.V."/>
        </authorList>
    </citation>
    <scope>PHOSPHORYLATION [LARGE SCALE ANALYSIS] AT SER-28; SER-40; SER-41; SER-145; SER-157; SER-187; SER-213; SER-305; SER-405; SER-566; SER-583 AND SER-622</scope>
    <scope>IDENTIFICATION BY MASS SPECTROMETRY [LARGE SCALE ANALYSIS]</scope>
</reference>
<dbReference type="EMBL" id="M55022">
    <property type="protein sequence ID" value="AAA41732.1"/>
    <property type="molecule type" value="Genomic_DNA"/>
</dbReference>
<dbReference type="EMBL" id="M55015">
    <property type="protein sequence ID" value="AAA41732.1"/>
    <property type="status" value="JOINED"/>
    <property type="molecule type" value="Genomic_DNA"/>
</dbReference>
<dbReference type="EMBL" id="M55017">
    <property type="protein sequence ID" value="AAA41732.1"/>
    <property type="status" value="JOINED"/>
    <property type="molecule type" value="Genomic_DNA"/>
</dbReference>
<dbReference type="EMBL" id="M55020">
    <property type="protein sequence ID" value="AAA41732.1"/>
    <property type="status" value="JOINED"/>
    <property type="molecule type" value="Genomic_DNA"/>
</dbReference>
<dbReference type="EMBL" id="M22090">
    <property type="protein sequence ID" value="AAA41733.1"/>
    <property type="molecule type" value="Genomic_DNA"/>
</dbReference>
<dbReference type="PIR" id="JH0148">
    <property type="entry name" value="JH0148"/>
</dbReference>
<dbReference type="SMR" id="P13383"/>
<dbReference type="FunCoup" id="P13383">
    <property type="interactions" value="2261"/>
</dbReference>
<dbReference type="IntAct" id="P13383">
    <property type="interactions" value="6"/>
</dbReference>
<dbReference type="MINT" id="P13383"/>
<dbReference type="STRING" id="10116.ENSRNOP00000024712"/>
<dbReference type="GlyGen" id="P13383">
    <property type="glycosylation" value="7 sites"/>
</dbReference>
<dbReference type="iPTMnet" id="P13383"/>
<dbReference type="PhosphoSitePlus" id="P13383"/>
<dbReference type="jPOST" id="P13383"/>
<dbReference type="PaxDb" id="10116-ENSRNOP00000024712"/>
<dbReference type="UCSC" id="RGD:3153">
    <property type="organism name" value="rat"/>
</dbReference>
<dbReference type="AGR" id="RGD:3153"/>
<dbReference type="RGD" id="3153">
    <property type="gene designation" value="Ncl"/>
</dbReference>
<dbReference type="eggNOG" id="KOG0123">
    <property type="taxonomic scope" value="Eukaryota"/>
</dbReference>
<dbReference type="InParanoid" id="P13383"/>
<dbReference type="Reactome" id="R-RNO-6791226">
    <property type="pathway name" value="Major pathway of rRNA processing in the nucleolus and cytosol"/>
</dbReference>
<dbReference type="PRO" id="PR:P13383"/>
<dbReference type="Proteomes" id="UP000002494">
    <property type="component" value="Unplaced"/>
</dbReference>
<dbReference type="GO" id="GO:0005938">
    <property type="term" value="C:cell cortex"/>
    <property type="evidence" value="ECO:0000266"/>
    <property type="project" value="RGD"/>
</dbReference>
<dbReference type="GO" id="GO:0009986">
    <property type="term" value="C:cell surface"/>
    <property type="evidence" value="ECO:0000314"/>
    <property type="project" value="RGD"/>
</dbReference>
<dbReference type="GO" id="GO:0001533">
    <property type="term" value="C:cornified envelope"/>
    <property type="evidence" value="ECO:0000266"/>
    <property type="project" value="RGD"/>
</dbReference>
<dbReference type="GO" id="GO:0001651">
    <property type="term" value="C:dense fibrillar component"/>
    <property type="evidence" value="ECO:0000314"/>
    <property type="project" value="RGD"/>
</dbReference>
<dbReference type="GO" id="GO:0001650">
    <property type="term" value="C:fibrillar center"/>
    <property type="evidence" value="ECO:0000314"/>
    <property type="project" value="RGD"/>
</dbReference>
<dbReference type="GO" id="GO:0005730">
    <property type="term" value="C:nucleolus"/>
    <property type="evidence" value="ECO:0000266"/>
    <property type="project" value="RGD"/>
</dbReference>
<dbReference type="GO" id="GO:0005654">
    <property type="term" value="C:nucleoplasm"/>
    <property type="evidence" value="ECO:0000266"/>
    <property type="project" value="RGD"/>
</dbReference>
<dbReference type="GO" id="GO:0005634">
    <property type="term" value="C:nucleus"/>
    <property type="evidence" value="ECO:0000266"/>
    <property type="project" value="RGD"/>
</dbReference>
<dbReference type="GO" id="GO:1990904">
    <property type="term" value="C:ribonucleoprotein complex"/>
    <property type="evidence" value="ECO:0000250"/>
    <property type="project" value="UniProtKB"/>
</dbReference>
<dbReference type="GO" id="GO:0005681">
    <property type="term" value="C:spliceosomal complex"/>
    <property type="evidence" value="ECO:0000318"/>
    <property type="project" value="GO_Central"/>
</dbReference>
<dbReference type="GO" id="GO:0005509">
    <property type="term" value="F:calcium ion binding"/>
    <property type="evidence" value="ECO:0000314"/>
    <property type="project" value="RGD"/>
</dbReference>
<dbReference type="GO" id="GO:0044547">
    <property type="term" value="F:DNA topoisomerase binding"/>
    <property type="evidence" value="ECO:0000266"/>
    <property type="project" value="RGD"/>
</dbReference>
<dbReference type="GO" id="GO:1990631">
    <property type="term" value="F:ErbB-4 class receptor binding"/>
    <property type="evidence" value="ECO:0000353"/>
    <property type="project" value="RGD"/>
</dbReference>
<dbReference type="GO" id="GO:0042393">
    <property type="term" value="F:histone binding"/>
    <property type="evidence" value="ECO:0000314"/>
    <property type="project" value="RGD"/>
</dbReference>
<dbReference type="GO" id="GO:0042802">
    <property type="term" value="F:identical protein binding"/>
    <property type="evidence" value="ECO:0000266"/>
    <property type="project" value="RGD"/>
</dbReference>
<dbReference type="GO" id="GO:0043560">
    <property type="term" value="F:insulin receptor substrate binding"/>
    <property type="evidence" value="ECO:0000266"/>
    <property type="project" value="RGD"/>
</dbReference>
<dbReference type="GO" id="GO:0043236">
    <property type="term" value="F:laminin binding"/>
    <property type="evidence" value="ECO:0000314"/>
    <property type="project" value="RGD"/>
</dbReference>
<dbReference type="GO" id="GO:0048027">
    <property type="term" value="F:mRNA 5'-UTR binding"/>
    <property type="evidence" value="ECO:0000266"/>
    <property type="project" value="RGD"/>
</dbReference>
<dbReference type="GO" id="GO:0042731">
    <property type="term" value="F:PH domain binding"/>
    <property type="evidence" value="ECO:0000266"/>
    <property type="project" value="RGD"/>
</dbReference>
<dbReference type="GO" id="GO:0003723">
    <property type="term" value="F:RNA binding"/>
    <property type="evidence" value="ECO:0000314"/>
    <property type="project" value="RGD"/>
</dbReference>
<dbReference type="GO" id="GO:0042134">
    <property type="term" value="F:rRNA primary transcript binding"/>
    <property type="evidence" value="ECO:0000314"/>
    <property type="project" value="RGD"/>
</dbReference>
<dbReference type="GO" id="GO:0035368">
    <property type="term" value="F:selenocysteine insertion sequence binding"/>
    <property type="evidence" value="ECO:0000314"/>
    <property type="project" value="RGD"/>
</dbReference>
<dbReference type="GO" id="GO:0043565">
    <property type="term" value="F:sequence-specific DNA binding"/>
    <property type="evidence" value="ECO:0000314"/>
    <property type="project" value="RGD"/>
</dbReference>
<dbReference type="GO" id="GO:0005102">
    <property type="term" value="F:signaling receptor binding"/>
    <property type="evidence" value="ECO:0000314"/>
    <property type="project" value="RGD"/>
</dbReference>
<dbReference type="GO" id="GO:0003697">
    <property type="term" value="F:single-stranded DNA binding"/>
    <property type="evidence" value="ECO:0000314"/>
    <property type="project" value="RGD"/>
</dbReference>
<dbReference type="GO" id="GO:0042162">
    <property type="term" value="F:telomeric DNA binding"/>
    <property type="evidence" value="ECO:0000250"/>
    <property type="project" value="UniProtKB"/>
</dbReference>
<dbReference type="GO" id="GO:0001525">
    <property type="term" value="P:angiogenesis"/>
    <property type="evidence" value="ECO:0000266"/>
    <property type="project" value="RGD"/>
</dbReference>
<dbReference type="GO" id="GO:0071364">
    <property type="term" value="P:cellular response to epidermal growth factor stimulus"/>
    <property type="evidence" value="ECO:0000266"/>
    <property type="project" value="RGD"/>
</dbReference>
<dbReference type="GO" id="GO:1990830">
    <property type="term" value="P:cellular response to leukemia inhibitory factor"/>
    <property type="evidence" value="ECO:0000266"/>
    <property type="project" value="RGD"/>
</dbReference>
<dbReference type="GO" id="GO:0071222">
    <property type="term" value="P:cellular response to lipopolysaccharide"/>
    <property type="evidence" value="ECO:0000315"/>
    <property type="project" value="RGD"/>
</dbReference>
<dbReference type="GO" id="GO:0006897">
    <property type="term" value="P:endocytosis"/>
    <property type="evidence" value="ECO:0000315"/>
    <property type="project" value="RGD"/>
</dbReference>
<dbReference type="GO" id="GO:0097421">
    <property type="term" value="P:liver regeneration"/>
    <property type="evidence" value="ECO:0000270"/>
    <property type="project" value="RGD"/>
</dbReference>
<dbReference type="GO" id="GO:0043066">
    <property type="term" value="P:negative regulation of apoptotic process"/>
    <property type="evidence" value="ECO:0000315"/>
    <property type="project" value="RGD"/>
</dbReference>
<dbReference type="GO" id="GO:0046627">
    <property type="term" value="P:negative regulation of insulin receptor signaling pathway"/>
    <property type="evidence" value="ECO:0000266"/>
    <property type="project" value="RGD"/>
</dbReference>
<dbReference type="GO" id="GO:0017148">
    <property type="term" value="P:negative regulation of translation"/>
    <property type="evidence" value="ECO:0000266"/>
    <property type="project" value="RGD"/>
</dbReference>
<dbReference type="GO" id="GO:0032755">
    <property type="term" value="P:positive regulation of interleukin-6 production"/>
    <property type="evidence" value="ECO:0000315"/>
    <property type="project" value="RGD"/>
</dbReference>
<dbReference type="GO" id="GO:0048026">
    <property type="term" value="P:positive regulation of mRNA splicing, via spliceosome"/>
    <property type="evidence" value="ECO:0000318"/>
    <property type="project" value="GO_Central"/>
</dbReference>
<dbReference type="GO" id="GO:0045944">
    <property type="term" value="P:positive regulation of transcription by RNA polymerase II"/>
    <property type="evidence" value="ECO:0000266"/>
    <property type="project" value="RGD"/>
</dbReference>
<dbReference type="GO" id="GO:1901838">
    <property type="term" value="P:positive regulation of transcription of nucleolar large rRNA by RNA polymerase I"/>
    <property type="evidence" value="ECO:0000266"/>
    <property type="project" value="RGD"/>
</dbReference>
<dbReference type="GO" id="GO:0032760">
    <property type="term" value="P:positive regulation of tumor necrosis factor production"/>
    <property type="evidence" value="ECO:0000315"/>
    <property type="project" value="RGD"/>
</dbReference>
<dbReference type="GO" id="GO:2000232">
    <property type="term" value="P:regulation of rRNA processing"/>
    <property type="evidence" value="ECO:0000314"/>
    <property type="project" value="RGD"/>
</dbReference>
<dbReference type="GO" id="GO:0007283">
    <property type="term" value="P:spermatogenesis"/>
    <property type="evidence" value="ECO:0000270"/>
    <property type="project" value="RGD"/>
</dbReference>
<dbReference type="CDD" id="cd12403">
    <property type="entry name" value="RRM1_NCL"/>
    <property type="match status" value="1"/>
</dbReference>
<dbReference type="CDD" id="cd12404">
    <property type="entry name" value="RRM2_NCL"/>
    <property type="match status" value="1"/>
</dbReference>
<dbReference type="CDD" id="cd12405">
    <property type="entry name" value="RRM3_NCL"/>
    <property type="match status" value="1"/>
</dbReference>
<dbReference type="CDD" id="cd12406">
    <property type="entry name" value="RRM4_NCL"/>
    <property type="match status" value="1"/>
</dbReference>
<dbReference type="FunFam" id="3.30.70.330:FF:000278">
    <property type="entry name" value="Nucleolin"/>
    <property type="match status" value="1"/>
</dbReference>
<dbReference type="FunFam" id="3.30.70.330:FF:001072">
    <property type="entry name" value="Nucleolin"/>
    <property type="match status" value="1"/>
</dbReference>
<dbReference type="FunFam" id="3.30.70.330:FF:000264">
    <property type="entry name" value="nucleolin"/>
    <property type="match status" value="1"/>
</dbReference>
<dbReference type="FunFam" id="3.30.70.330:FF:000265">
    <property type="entry name" value="nucleolin isoform X1"/>
    <property type="match status" value="1"/>
</dbReference>
<dbReference type="Gene3D" id="3.30.70.330">
    <property type="match status" value="4"/>
</dbReference>
<dbReference type="InterPro" id="IPR034230">
    <property type="entry name" value="Nucleolin_RRM1"/>
</dbReference>
<dbReference type="InterPro" id="IPR034233">
    <property type="entry name" value="Nucleolin_RRM2"/>
</dbReference>
<dbReference type="InterPro" id="IPR034234">
    <property type="entry name" value="Nucleolin_RRM3"/>
</dbReference>
<dbReference type="InterPro" id="IPR034235">
    <property type="entry name" value="Nucleolin_RRM4"/>
</dbReference>
<dbReference type="InterPro" id="IPR012677">
    <property type="entry name" value="Nucleotide-bd_a/b_plait_sf"/>
</dbReference>
<dbReference type="InterPro" id="IPR035979">
    <property type="entry name" value="RBD_domain_sf"/>
</dbReference>
<dbReference type="InterPro" id="IPR000504">
    <property type="entry name" value="RRM_dom"/>
</dbReference>
<dbReference type="InterPro" id="IPR050374">
    <property type="entry name" value="RRT5_SRSF_SR"/>
</dbReference>
<dbReference type="PANTHER" id="PTHR23003:SF42">
    <property type="entry name" value="NUCLEOLIN"/>
    <property type="match status" value="1"/>
</dbReference>
<dbReference type="PANTHER" id="PTHR23003">
    <property type="entry name" value="RNA RECOGNITION MOTIF RRM DOMAIN CONTAINING PROTEIN"/>
    <property type="match status" value="1"/>
</dbReference>
<dbReference type="Pfam" id="PF00076">
    <property type="entry name" value="RRM_1"/>
    <property type="match status" value="4"/>
</dbReference>
<dbReference type="SMART" id="SM00360">
    <property type="entry name" value="RRM"/>
    <property type="match status" value="4"/>
</dbReference>
<dbReference type="SUPFAM" id="SSF54928">
    <property type="entry name" value="RNA-binding domain, RBD"/>
    <property type="match status" value="4"/>
</dbReference>
<dbReference type="PROSITE" id="PS50102">
    <property type="entry name" value="RRM"/>
    <property type="match status" value="4"/>
</dbReference>
<feature type="chain" id="PRO_0000081694" description="Nucleolin">
    <location>
        <begin position="1"/>
        <end position="713"/>
    </location>
</feature>
<feature type="repeat" description="1">
    <location>
        <begin position="58"/>
        <end position="65"/>
    </location>
</feature>
<feature type="repeat" description="2">
    <location>
        <begin position="75"/>
        <end position="82"/>
    </location>
</feature>
<feature type="repeat" description="3">
    <location>
        <begin position="83"/>
        <end position="90"/>
    </location>
</feature>
<feature type="repeat" description="4">
    <location>
        <begin position="91"/>
        <end position="98"/>
    </location>
</feature>
<feature type="repeat" description="5; truncated">
    <location>
        <begin position="99"/>
        <end position="104"/>
    </location>
</feature>
<feature type="repeat" description="6">
    <location>
        <begin position="105"/>
        <end position="112"/>
    </location>
</feature>
<feature type="repeat" description="7">
    <location>
        <begin position="120"/>
        <end position="127"/>
    </location>
</feature>
<feature type="repeat" description="8">
    <location>
        <begin position="128"/>
        <end position="135"/>
    </location>
</feature>
<feature type="domain" description="RRM 1" evidence="5">
    <location>
        <begin position="311"/>
        <end position="387"/>
    </location>
</feature>
<feature type="domain" description="RRM 2" evidence="5">
    <location>
        <begin position="397"/>
        <end position="470"/>
    </location>
</feature>
<feature type="domain" description="RRM 3" evidence="5">
    <location>
        <begin position="489"/>
        <end position="563"/>
    </location>
</feature>
<feature type="domain" description="RRM 4" evidence="5">
    <location>
        <begin position="575"/>
        <end position="650"/>
    </location>
</feature>
<feature type="region of interest" description="Disordered" evidence="6">
    <location>
        <begin position="1"/>
        <end position="309"/>
    </location>
</feature>
<feature type="region of interest" description="8 X 8 AA tandem repeats of X-T-P-X-K-K-X-X">
    <location>
        <begin position="58"/>
        <end position="135"/>
    </location>
</feature>
<feature type="region of interest" description="Disordered" evidence="6">
    <location>
        <begin position="645"/>
        <end position="713"/>
    </location>
</feature>
<feature type="compositionally biased region" description="Acidic residues" evidence="6">
    <location>
        <begin position="24"/>
        <end position="46"/>
    </location>
</feature>
<feature type="compositionally biased region" description="Low complexity" evidence="6">
    <location>
        <begin position="56"/>
        <end position="111"/>
    </location>
</feature>
<feature type="compositionally biased region" description="Acidic residues" evidence="6">
    <location>
        <begin position="145"/>
        <end position="168"/>
    </location>
</feature>
<feature type="compositionally biased region" description="Low complexity" evidence="6">
    <location>
        <begin position="169"/>
        <end position="186"/>
    </location>
</feature>
<feature type="compositionally biased region" description="Acidic residues" evidence="6">
    <location>
        <begin position="187"/>
        <end position="218"/>
    </location>
</feature>
<feature type="compositionally biased region" description="Acidic residues" evidence="6">
    <location>
        <begin position="242"/>
        <end position="275"/>
    </location>
</feature>
<feature type="compositionally biased region" description="Basic and acidic residues" evidence="6">
    <location>
        <begin position="288"/>
        <end position="304"/>
    </location>
</feature>
<feature type="compositionally biased region" description="Gly residues" evidence="6">
    <location>
        <begin position="653"/>
        <end position="702"/>
    </location>
</feature>
<feature type="modified residue" description="N6-acetyllysine" evidence="4">
    <location>
        <position position="9"/>
    </location>
</feature>
<feature type="modified residue" description="N6-acetyllysine" evidence="3">
    <location>
        <position position="15"/>
    </location>
</feature>
<feature type="modified residue" description="N6-acetyllysine" evidence="3">
    <location>
        <position position="16"/>
    </location>
</feature>
<feature type="modified residue" description="Phosphoserine" evidence="8">
    <location>
        <position position="28"/>
    </location>
</feature>
<feature type="modified residue" description="Phosphoserine" evidence="4">
    <location>
        <position position="34"/>
    </location>
</feature>
<feature type="modified residue" description="Phosphoserine" evidence="8">
    <location>
        <position position="40"/>
    </location>
</feature>
<feature type="modified residue" description="Phosphoserine" evidence="8">
    <location>
        <position position="41"/>
    </location>
</feature>
<feature type="modified residue" description="Phosphoserine" evidence="4">
    <location>
        <position position="67"/>
    </location>
</feature>
<feature type="modified residue" description="Phosphothreonine" evidence="4">
    <location>
        <position position="69"/>
    </location>
</feature>
<feature type="modified residue" description="Phosphothreonine" evidence="4">
    <location>
        <position position="76"/>
    </location>
</feature>
<feature type="modified residue" description="Phosphothreonine" evidence="4">
    <location>
        <position position="84"/>
    </location>
</feature>
<feature type="modified residue" description="Phosphothreonine" evidence="4">
    <location>
        <position position="92"/>
    </location>
</feature>
<feature type="modified residue" description="N6-acetyllysine" evidence="3">
    <location>
        <position position="96"/>
    </location>
</feature>
<feature type="modified residue" description="Phosphothreonine" evidence="4">
    <location>
        <position position="99"/>
    </location>
</feature>
<feature type="modified residue" description="N6-acetyllysine" evidence="4">
    <location>
        <position position="102"/>
    </location>
</feature>
<feature type="modified residue" description="Phosphothreonine" evidence="4">
    <location>
        <position position="106"/>
    </location>
</feature>
<feature type="modified residue" description="N6-acetyllysine" evidence="3">
    <location>
        <position position="109"/>
    </location>
</feature>
<feature type="modified residue" description="N6-acetyllysine" evidence="4">
    <location>
        <position position="116"/>
    </location>
</feature>
<feature type="modified residue" description="Phosphothreonine" evidence="4">
    <location>
        <position position="121"/>
    </location>
</feature>
<feature type="modified residue" description="N6-acetyllysine" evidence="4">
    <location>
        <position position="124"/>
    </location>
</feature>
<feature type="modified residue" description="Phosphoserine" evidence="7 8">
    <location>
        <position position="145"/>
    </location>
</feature>
<feature type="modified residue" description="Phosphoserine" evidence="7 8">
    <location>
        <position position="157"/>
    </location>
</feature>
<feature type="modified residue" description="Phosphoserine" evidence="8">
    <location>
        <position position="187"/>
    </location>
</feature>
<feature type="modified residue" description="Phosphoserine" evidence="8">
    <location>
        <position position="213"/>
    </location>
</feature>
<feature type="modified residue" description="Phosphothreonine" evidence="4">
    <location>
        <position position="221"/>
    </location>
</feature>
<feature type="modified residue" description="Phosphoserine" evidence="8">
    <location>
        <position position="305"/>
    </location>
</feature>
<feature type="modified residue" description="N6-acetyllysine" evidence="4">
    <location>
        <position position="322"/>
    </location>
</feature>
<feature type="modified residue" description="N6-acetyllysine" evidence="3">
    <location>
        <position position="352"/>
    </location>
</feature>
<feature type="modified residue" description="Phosphoserine" evidence="4">
    <location>
        <position position="360"/>
    </location>
</feature>
<feature type="modified residue" description="Phosphothreonine" evidence="4">
    <location>
        <position position="371"/>
    </location>
</feature>
<feature type="modified residue" description="N6-acetyllysine; alternate" evidence="4">
    <location>
        <position position="381"/>
    </location>
</feature>
<feature type="modified residue" description="N6-acetyllysine" evidence="4">
    <location>
        <position position="402"/>
    </location>
</feature>
<feature type="modified residue" description="Phosphoserine" evidence="8">
    <location>
        <position position="405"/>
    </location>
</feature>
<feature type="modified residue" description="Phosphothreonine" evidence="4">
    <location>
        <position position="409"/>
    </location>
</feature>
<feature type="modified residue" description="N6-acetyllysine" evidence="3">
    <location>
        <position position="448"/>
    </location>
</feature>
<feature type="modified residue" description="Phosphoserine" evidence="4">
    <location>
        <position position="462"/>
    </location>
</feature>
<feature type="modified residue" description="Phosphoserine" evidence="4">
    <location>
        <position position="464"/>
    </location>
</feature>
<feature type="modified residue" description="N6-acetyllysine" evidence="3">
    <location>
        <position position="471"/>
    </location>
</feature>
<feature type="modified residue" description="N6-acetyllysine" evidence="3">
    <location>
        <position position="480"/>
    </location>
</feature>
<feature type="modified residue" description="N6-acetyllysine; alternate" evidence="4">
    <location>
        <position position="516"/>
    </location>
</feature>
<feature type="modified residue" description="N6-acetyllysine" evidence="3">
    <location>
        <position position="524"/>
    </location>
</feature>
<feature type="modified residue" description="Phosphoserine" evidence="8">
    <location>
        <position position="566"/>
    </location>
</feature>
<feature type="modified residue" description="N6-acetyllysine" evidence="4">
    <location>
        <position position="575"/>
    </location>
</feature>
<feature type="modified residue" description="N6-acetyllysine; alternate" evidence="4">
    <location>
        <position position="580"/>
    </location>
</feature>
<feature type="modified residue" description="Phosphoserine" evidence="8">
    <location>
        <position position="583"/>
    </location>
</feature>
<feature type="modified residue" description="Phosphoserine" evidence="4">
    <location>
        <position position="594"/>
    </location>
</feature>
<feature type="modified residue" description="Phosphoserine" evidence="8">
    <location>
        <position position="622"/>
    </location>
</feature>
<feature type="modified residue" description="N6-acetyllysine" evidence="4">
    <location>
        <position position="649"/>
    </location>
</feature>
<feature type="modified residue" description="Asymmetric dimethylarginine" evidence="2">
    <location>
        <position position="659"/>
    </location>
</feature>
<feature type="modified residue" description="Asymmetric dimethylarginine" evidence="2">
    <location>
        <position position="663"/>
    </location>
</feature>
<feature type="modified residue" description="Asymmetric dimethylarginine" evidence="2">
    <location>
        <position position="669"/>
    </location>
</feature>
<feature type="modified residue" description="Asymmetric dimethylarginine" evidence="2">
    <location>
        <position position="673"/>
    </location>
</feature>
<feature type="modified residue" description="Asymmetric dimethylarginine" evidence="2">
    <location>
        <position position="676"/>
    </location>
</feature>
<feature type="modified residue" description="Asymmetric dimethylarginine" evidence="2">
    <location>
        <position position="682"/>
    </location>
</feature>
<feature type="modified residue" description="Asymmetric dimethylarginine" evidence="2">
    <location>
        <position position="684"/>
    </location>
</feature>
<feature type="modified residue" description="Asymmetric dimethylarginine" evidence="2">
    <location>
        <position position="690"/>
    </location>
</feature>
<feature type="modified residue" description="Asymmetric dimethylarginine" evidence="2">
    <location>
        <position position="694"/>
    </location>
</feature>
<feature type="modified residue" description="Asymmetric dimethylarginine; alternate" evidence="2">
    <location>
        <position position="697"/>
    </location>
</feature>
<feature type="modified residue" description="Omega-N-methylarginine; alternate" evidence="3">
    <location>
        <position position="697"/>
    </location>
</feature>
<feature type="cross-link" description="Glycyl lysine isopeptide (Lys-Gly) (interchain with G-Cter in SUMO1); alternate" evidence="4">
    <location>
        <position position="301"/>
    </location>
</feature>
<feature type="cross-link" description="Glycyl lysine isopeptide (Lys-Gly) (interchain with G-Cter in SUMO2); alternate" evidence="4">
    <location>
        <position position="301"/>
    </location>
</feature>
<feature type="cross-link" description="Glycyl lysine isopeptide (Lys-Gly) (interchain with G-Cter in SUMO1); alternate" evidence="4">
    <location>
        <position position="328"/>
    </location>
</feature>
<feature type="cross-link" description="Glycyl lysine isopeptide (Lys-Gly) (interchain with G-Cter in SUMO2); alternate" evidence="4">
    <location>
        <position position="328"/>
    </location>
</feature>
<feature type="cross-link" description="Glycyl lysine isopeptide (Lys-Gly) (interchain with G-Cter in SUMO2)" evidence="4">
    <location>
        <position position="374"/>
    </location>
</feature>
<feature type="cross-link" description="Glycyl lysine isopeptide (Lys-Gly) (interchain with G-Cter in SUMO2); alternate" evidence="4">
    <location>
        <position position="381"/>
    </location>
</feature>
<feature type="cross-link" description="Glycyl lysine isopeptide (Lys-Gly) (interchain with G-Cter in SUMO2); alternate" evidence="4">
    <location>
        <position position="516"/>
    </location>
</feature>
<feature type="cross-link" description="Glycyl lysine isopeptide (Lys-Gly) (interchain with G-Cter in SUMO2); alternate" evidence="4">
    <location>
        <position position="580"/>
    </location>
</feature>
<feature type="cross-link" description="Glycyl lysine isopeptide (Lys-Gly) (interchain with G-Cter in SUMO1); alternate" evidence="4">
    <location>
        <position position="592"/>
    </location>
</feature>
<feature type="cross-link" description="Glycyl lysine isopeptide (Lys-Gly) (interchain with G-Cter in SUMO2); alternate" evidence="4">
    <location>
        <position position="592"/>
    </location>
</feature>
<feature type="cross-link" description="Glycyl lysine isopeptide (Lys-Gly) (interchain with G-Cter in SUMO2)" evidence="4">
    <location>
        <position position="627"/>
    </location>
</feature>
<name>NUCL_RAT</name>
<protein>
    <recommendedName>
        <fullName>Nucleolin</fullName>
    </recommendedName>
    <alternativeName>
        <fullName>Protein C23</fullName>
    </alternativeName>
</protein>